<feature type="chain" id="PRO_0000294091" description="Cyclin-dependent kinase inhibitor 7">
    <location>
        <begin position="1"/>
        <end position="195"/>
    </location>
</feature>
<feature type="region of interest" description="Disordered" evidence="1">
    <location>
        <begin position="1"/>
        <end position="50"/>
    </location>
</feature>
<feature type="region of interest" description="Disordered" evidence="1">
    <location>
        <begin position="61"/>
        <end position="80"/>
    </location>
</feature>
<feature type="region of interest" description="Disordered" evidence="1">
    <location>
        <begin position="117"/>
        <end position="154"/>
    </location>
</feature>
<feature type="compositionally biased region" description="Basic and acidic residues" evidence="1">
    <location>
        <begin position="1"/>
        <end position="11"/>
    </location>
</feature>
<feature type="compositionally biased region" description="Low complexity" evidence="1">
    <location>
        <begin position="37"/>
        <end position="50"/>
    </location>
</feature>
<feature type="compositionally biased region" description="Low complexity" evidence="1">
    <location>
        <begin position="68"/>
        <end position="80"/>
    </location>
</feature>
<feature type="modified residue" description="Phosphothreonine; by KIN10" evidence="6">
    <location>
        <position position="151"/>
    </location>
</feature>
<feature type="sequence conflict" description="In Ref. 1; CAC41621." evidence="7" ref="1">
    <original>L</original>
    <variation>R</variation>
    <location>
        <position position="67"/>
    </location>
</feature>
<accession>Q94CL9</accession>
<accession>Q9FX90</accession>
<gene>
    <name type="primary">KRP7</name>
    <name type="synonym">ICK5</name>
    <name type="ordered locus">At1g49620</name>
    <name type="ORF">F14J22.14</name>
</gene>
<sequence length="195" mass="21965">MSETKPKRDSEYEGSNIKRMRLDDDDDVLRSPTRTLSSSSSSSLAYSVSDSGGFCSVALSEEEDDHLSSSISSGCSSSETNEIATRLPFSDLEAHEISETEISTLLTNNFRKQGISSSENLGETAEMDSATTEMRDQRKTEKKKKMEKSPTQAELDDFFSAAERYEQKRFTEKYNYDIVNDTPLEGRYQWVSLKP</sequence>
<evidence type="ECO:0000256" key="1">
    <source>
        <dbReference type="SAM" id="MobiDB-lite"/>
    </source>
</evidence>
<evidence type="ECO:0000269" key="2">
    <source>
    </source>
</evidence>
<evidence type="ECO:0000269" key="3">
    <source>
    </source>
</evidence>
<evidence type="ECO:0000269" key="4">
    <source>
    </source>
</evidence>
<evidence type="ECO:0000269" key="5">
    <source>
    </source>
</evidence>
<evidence type="ECO:0000269" key="6">
    <source>
    </source>
</evidence>
<evidence type="ECO:0000305" key="7"/>
<protein>
    <recommendedName>
        <fullName>Cyclin-dependent kinase inhibitor 7</fullName>
    </recommendedName>
    <alternativeName>
        <fullName>Inhibitor/interactor of CDK protein 5</fullName>
    </alternativeName>
    <alternativeName>
        <fullName>KIP-related protein 7</fullName>
    </alternativeName>
</protein>
<proteinExistence type="evidence at protein level"/>
<keyword id="KW-0131">Cell cycle</keyword>
<keyword id="KW-0539">Nucleus</keyword>
<keyword id="KW-0597">Phosphoprotein</keyword>
<keyword id="KW-0649">Protein kinase inhibitor</keyword>
<keyword id="KW-1185">Reference proteome</keyword>
<keyword id="KW-0832">Ubl conjugation</keyword>
<organism>
    <name type="scientific">Arabidopsis thaliana</name>
    <name type="common">Mouse-ear cress</name>
    <dbReference type="NCBI Taxonomy" id="3702"/>
    <lineage>
        <taxon>Eukaryota</taxon>
        <taxon>Viridiplantae</taxon>
        <taxon>Streptophyta</taxon>
        <taxon>Embryophyta</taxon>
        <taxon>Tracheophyta</taxon>
        <taxon>Spermatophyta</taxon>
        <taxon>Magnoliopsida</taxon>
        <taxon>eudicotyledons</taxon>
        <taxon>Gunneridae</taxon>
        <taxon>Pentapetalae</taxon>
        <taxon>rosids</taxon>
        <taxon>malvids</taxon>
        <taxon>Brassicales</taxon>
        <taxon>Brassicaceae</taxon>
        <taxon>Camelineae</taxon>
        <taxon>Arabidopsis</taxon>
    </lineage>
</organism>
<name>KRP7_ARATH</name>
<dbReference type="EMBL" id="AJ301558">
    <property type="protein sequence ID" value="CAC41621.1"/>
    <property type="molecule type" value="mRNA"/>
</dbReference>
<dbReference type="EMBL" id="AC011807">
    <property type="protein sequence ID" value="AAG13048.1"/>
    <property type="molecule type" value="Genomic_DNA"/>
</dbReference>
<dbReference type="EMBL" id="CP002684">
    <property type="protein sequence ID" value="AEE32450.1"/>
    <property type="molecule type" value="Genomic_DNA"/>
</dbReference>
<dbReference type="PIR" id="H96532">
    <property type="entry name" value="H96532"/>
</dbReference>
<dbReference type="RefSeq" id="NP_175385.1">
    <property type="nucleotide sequence ID" value="NM_103850.2"/>
</dbReference>
<dbReference type="SMR" id="Q94CL9"/>
<dbReference type="BioGRID" id="26611">
    <property type="interactions" value="25"/>
</dbReference>
<dbReference type="DIP" id="DIP-40167N"/>
<dbReference type="FunCoup" id="Q94CL9">
    <property type="interactions" value="198"/>
</dbReference>
<dbReference type="IntAct" id="Q94CL9">
    <property type="interactions" value="12"/>
</dbReference>
<dbReference type="STRING" id="3702.Q94CL9"/>
<dbReference type="iPTMnet" id="Q94CL9"/>
<dbReference type="PaxDb" id="3702-AT1G49620.1"/>
<dbReference type="EnsemblPlants" id="AT1G49620.1">
    <property type="protein sequence ID" value="AT1G49620.1"/>
    <property type="gene ID" value="AT1G49620"/>
</dbReference>
<dbReference type="GeneID" id="841386"/>
<dbReference type="Gramene" id="AT1G49620.1">
    <property type="protein sequence ID" value="AT1G49620.1"/>
    <property type="gene ID" value="AT1G49620"/>
</dbReference>
<dbReference type="KEGG" id="ath:AT1G49620"/>
<dbReference type="Araport" id="AT1G49620"/>
<dbReference type="TAIR" id="AT1G49620">
    <property type="gene designation" value="ICK5"/>
</dbReference>
<dbReference type="eggNOG" id="ENOG502R7GZ">
    <property type="taxonomic scope" value="Eukaryota"/>
</dbReference>
<dbReference type="HOGENOM" id="CLU_083146_2_0_1"/>
<dbReference type="InParanoid" id="Q94CL9"/>
<dbReference type="OMA" id="CIRNCKR"/>
<dbReference type="PhylomeDB" id="Q94CL9"/>
<dbReference type="PRO" id="PR:Q94CL9"/>
<dbReference type="Proteomes" id="UP000006548">
    <property type="component" value="Chromosome 1"/>
</dbReference>
<dbReference type="ExpressionAtlas" id="Q94CL9">
    <property type="expression patterns" value="baseline and differential"/>
</dbReference>
<dbReference type="GO" id="GO:0001673">
    <property type="term" value="C:male germ cell nucleus"/>
    <property type="evidence" value="ECO:0000314"/>
    <property type="project" value="UniProtKB"/>
</dbReference>
<dbReference type="GO" id="GO:0005654">
    <property type="term" value="C:nucleoplasm"/>
    <property type="evidence" value="ECO:0007669"/>
    <property type="project" value="UniProtKB-SubCell"/>
</dbReference>
<dbReference type="GO" id="GO:0004861">
    <property type="term" value="F:cyclin-dependent protein serine/threonine kinase inhibitor activity"/>
    <property type="evidence" value="ECO:0000316"/>
    <property type="project" value="TAIR"/>
</dbReference>
<dbReference type="GO" id="GO:0045736">
    <property type="term" value="P:negative regulation of cyclin-dependent protein serine/threonine kinase activity"/>
    <property type="evidence" value="ECO:0000314"/>
    <property type="project" value="TAIR"/>
</dbReference>
<dbReference type="FunFam" id="4.10.365.10:FF:000005">
    <property type="entry name" value="Cyclin-dependent kinase inhibitor 7"/>
    <property type="match status" value="1"/>
</dbReference>
<dbReference type="Gene3D" id="4.10.365.10">
    <property type="entry name" value="p27"/>
    <property type="match status" value="1"/>
</dbReference>
<dbReference type="InterPro" id="IPR003175">
    <property type="entry name" value="CDI_dom"/>
</dbReference>
<dbReference type="InterPro" id="IPR044898">
    <property type="entry name" value="CDI_dom_sf"/>
</dbReference>
<dbReference type="InterPro" id="IPR044275">
    <property type="entry name" value="KRP"/>
</dbReference>
<dbReference type="PANTHER" id="PTHR46776">
    <property type="entry name" value="CYCLIN-DEPENDENT KINASE INHIBITOR 4-RELATED"/>
    <property type="match status" value="1"/>
</dbReference>
<dbReference type="Pfam" id="PF02234">
    <property type="entry name" value="CDI"/>
    <property type="match status" value="1"/>
</dbReference>
<dbReference type="PIRSF" id="PIRSF017811">
    <property type="entry name" value="CDK_inhib_pln"/>
    <property type="match status" value="1"/>
</dbReference>
<reference key="1">
    <citation type="journal article" date="2001" name="Plant Cell">
        <title>Functional analysis of cyclin-dependent kinase inhibitors of Arabidopsis.</title>
        <authorList>
            <person name="de Veylder L."/>
            <person name="Beeckman T."/>
            <person name="Beemster G.T.S."/>
            <person name="Krols L."/>
            <person name="Terras F."/>
            <person name="Landrieu I."/>
            <person name="van der Schueren E."/>
            <person name="Maes S."/>
            <person name="Naudts M."/>
            <person name="Inze D."/>
        </authorList>
    </citation>
    <scope>NUCLEOTIDE SEQUENCE [MRNA]</scope>
    <scope>TISSUE SPECIFICITY</scope>
    <scope>INTERACTION WITH CDKA-1 AND CYCD4-1</scope>
    <source>
        <strain>cv. Columbia</strain>
    </source>
</reference>
<reference key="2">
    <citation type="journal article" date="2000" name="Nature">
        <title>Sequence and analysis of chromosome 1 of the plant Arabidopsis thaliana.</title>
        <authorList>
            <person name="Theologis A."/>
            <person name="Ecker J.R."/>
            <person name="Palm C.J."/>
            <person name="Federspiel N.A."/>
            <person name="Kaul S."/>
            <person name="White O."/>
            <person name="Alonso J."/>
            <person name="Altafi H."/>
            <person name="Araujo R."/>
            <person name="Bowman C.L."/>
            <person name="Brooks S.Y."/>
            <person name="Buehler E."/>
            <person name="Chan A."/>
            <person name="Chao Q."/>
            <person name="Chen H."/>
            <person name="Cheuk R.F."/>
            <person name="Chin C.W."/>
            <person name="Chung M.K."/>
            <person name="Conn L."/>
            <person name="Conway A.B."/>
            <person name="Conway A.R."/>
            <person name="Creasy T.H."/>
            <person name="Dewar K."/>
            <person name="Dunn P."/>
            <person name="Etgu P."/>
            <person name="Feldblyum T.V."/>
            <person name="Feng J.-D."/>
            <person name="Fong B."/>
            <person name="Fujii C.Y."/>
            <person name="Gill J.E."/>
            <person name="Goldsmith A.D."/>
            <person name="Haas B."/>
            <person name="Hansen N.F."/>
            <person name="Hughes B."/>
            <person name="Huizar L."/>
            <person name="Hunter J.L."/>
            <person name="Jenkins J."/>
            <person name="Johnson-Hopson C."/>
            <person name="Khan S."/>
            <person name="Khaykin E."/>
            <person name="Kim C.J."/>
            <person name="Koo H.L."/>
            <person name="Kremenetskaia I."/>
            <person name="Kurtz D.B."/>
            <person name="Kwan A."/>
            <person name="Lam B."/>
            <person name="Langin-Hooper S."/>
            <person name="Lee A."/>
            <person name="Lee J.M."/>
            <person name="Lenz C.A."/>
            <person name="Li J.H."/>
            <person name="Li Y.-P."/>
            <person name="Lin X."/>
            <person name="Liu S.X."/>
            <person name="Liu Z.A."/>
            <person name="Luros J.S."/>
            <person name="Maiti R."/>
            <person name="Marziali A."/>
            <person name="Militscher J."/>
            <person name="Miranda M."/>
            <person name="Nguyen M."/>
            <person name="Nierman W.C."/>
            <person name="Osborne B.I."/>
            <person name="Pai G."/>
            <person name="Peterson J."/>
            <person name="Pham P.K."/>
            <person name="Rizzo M."/>
            <person name="Rooney T."/>
            <person name="Rowley D."/>
            <person name="Sakano H."/>
            <person name="Salzberg S.L."/>
            <person name="Schwartz J.R."/>
            <person name="Shinn P."/>
            <person name="Southwick A.M."/>
            <person name="Sun H."/>
            <person name="Tallon L.J."/>
            <person name="Tambunga G."/>
            <person name="Toriumi M.J."/>
            <person name="Town C.D."/>
            <person name="Utterback T."/>
            <person name="Van Aken S."/>
            <person name="Vaysberg M."/>
            <person name="Vysotskaia V.S."/>
            <person name="Walker M."/>
            <person name="Wu D."/>
            <person name="Yu G."/>
            <person name="Fraser C.M."/>
            <person name="Venter J.C."/>
            <person name="Davis R.W."/>
        </authorList>
    </citation>
    <scope>NUCLEOTIDE SEQUENCE [LARGE SCALE GENOMIC DNA]</scope>
    <source>
        <strain>cv. Columbia</strain>
    </source>
</reference>
<reference key="3">
    <citation type="journal article" date="2017" name="Plant J.">
        <title>Araport11: a complete reannotation of the Arabidopsis thaliana reference genome.</title>
        <authorList>
            <person name="Cheng C.Y."/>
            <person name="Krishnakumar V."/>
            <person name="Chan A.P."/>
            <person name="Thibaud-Nissen F."/>
            <person name="Schobel S."/>
            <person name="Town C.D."/>
        </authorList>
    </citation>
    <scope>GENOME REANNOTATION</scope>
    <source>
        <strain>cv. Columbia</strain>
    </source>
</reference>
<reference key="4">
    <citation type="journal article" date="2006" name="FEBS Lett.">
        <title>Arabidopsis KRPs have distinct inhibitory activity toward cyclin D2-associated kinases, including plant-specific B-type cyclin-dependent kinase.</title>
        <authorList>
            <person name="Nakai T."/>
            <person name="Kato K."/>
            <person name="Shinmyo A."/>
            <person name="Sekine M."/>
        </authorList>
    </citation>
    <scope>FUNCTION</scope>
</reference>
<reference key="5">
    <citation type="journal article" date="2007" name="Plant Cell Rep.">
        <title>Arabidopsis cyclin-dependent kinase inhibitors are nuclear-localized and show different localization patterns within the nucleoplasm.</title>
        <authorList>
            <person name="Bird D.A."/>
            <person name="Buruiana M.M."/>
            <person name="Zhou Y."/>
            <person name="Fowke L.C."/>
            <person name="Wang H."/>
        </authorList>
    </citation>
    <scope>SUBCELLULAR LOCATION</scope>
</reference>
<reference key="6">
    <citation type="journal article" date="2008" name="Nature">
        <title>Control of plant germline proliferation by SCF(FBL17) degradation of cell cycle inhibitors.</title>
        <authorList>
            <person name="Kim H.J."/>
            <person name="Oh S.A."/>
            <person name="Brownfield L."/>
            <person name="Hong S.H."/>
            <person name="Ryu H."/>
            <person name="Hwang I."/>
            <person name="Twell D."/>
            <person name="Nam H.G."/>
        </authorList>
    </citation>
    <scope>UBIQUITINATION</scope>
    <scope>TISSUE SPECIFICITY</scope>
    <scope>DEVELOPMENTAL STAGE</scope>
    <scope>SUBCELLULAR LOCATION</scope>
</reference>
<reference key="7">
    <citation type="journal article" date="2013" name="Plant J.">
        <title>Phosphorylation of p27(KIP1) homologs KRP6 and 7 by SNF1-related protein kinase-1 links plant energy homeostasis and cell proliferation.</title>
        <authorList>
            <person name="Guerinier T."/>
            <person name="Millan L."/>
            <person name="Crozet P."/>
            <person name="Oury C."/>
            <person name="Rey F."/>
            <person name="Valot B."/>
            <person name="Mathieu C."/>
            <person name="Vidal J."/>
            <person name="Hodges M."/>
            <person name="Thomas M."/>
            <person name="Glab N."/>
        </authorList>
    </citation>
    <scope>PHOSPHORYLATION AT THR-151</scope>
    <scope>IDENTIFICATION BY MASS SPECTROMETRY</scope>
</reference>
<comment type="function">
    <text evidence="3">Binds and inhibits CYCD2-1/CDKA-1 complex kinase activity. May target specifically CDKA-1.</text>
</comment>
<comment type="subunit">
    <text evidence="2">Specifically interacts with CDKA-1, but not with CDKB1-1. Interacts with CYCD4-1. Binds to FBL17.</text>
</comment>
<comment type="interaction">
    <interactant intactId="EBI-1773344">
        <id>Q94CL9</id>
    </interactant>
    <interactant intactId="EBI-371713">
        <id>P24100</id>
        <label>CDKA-1</label>
    </interactant>
    <organismsDiffer>false</organismsDiffer>
    <experiments>3</experiments>
</comment>
<comment type="interaction">
    <interactant intactId="EBI-1773344">
        <id>Q94CL9</id>
    </interactant>
    <interactant intactId="EBI-1253202">
        <id>Q8LGA1</id>
        <label>CYCD4-1</label>
    </interactant>
    <organismsDiffer>false</organismsDiffer>
    <experiments>2</experiments>
</comment>
<comment type="interaction">
    <interactant intactId="EBI-1773344">
        <id>Q94CL9</id>
    </interactant>
    <interactant intactId="EBI-2026732">
        <id>Q8W104</id>
        <label>FBL17</label>
    </interactant>
    <organismsDiffer>false</organismsDiffer>
    <experiments>4</experiments>
</comment>
<comment type="subcellular location">
    <subcellularLocation>
        <location evidence="4 5">Nucleus</location>
        <location evidence="4 5">Nucleoplasm</location>
    </subcellularLocation>
    <text>Homogeneously distributed. Accumulates strongly in vegetative cell nuclei immediately after asymmetric division and disappears later.</text>
</comment>
<comment type="tissue specificity">
    <text evidence="2 5">Expressed in flowers, in developing pollen, and at lower levels in roots and leaves.</text>
</comment>
<comment type="developmental stage">
    <text evidence="5">Present in uninucleate microspore and bicellular pollen.</text>
</comment>
<comment type="PTM">
    <text evidence="5">Ubiquitinated by SCF(FBL17). Ubiquitination leads to its subsequent degradation, thus controlling cell cycle progression.</text>
</comment>
<comment type="similarity">
    <text evidence="7">Belongs to the CDI family. ICK/KRP subfamily.</text>
</comment>